<organism>
    <name type="scientific">Debaryomyces hansenii (strain ATCC 36239 / CBS 767 / BCRC 21394 / JCM 1990 / NBRC 0083 / IGC 2968)</name>
    <name type="common">Yeast</name>
    <name type="synonym">Torulaspora hansenii</name>
    <dbReference type="NCBI Taxonomy" id="284592"/>
    <lineage>
        <taxon>Eukaryota</taxon>
        <taxon>Fungi</taxon>
        <taxon>Dikarya</taxon>
        <taxon>Ascomycota</taxon>
        <taxon>Saccharomycotina</taxon>
        <taxon>Pichiomycetes</taxon>
        <taxon>Debaryomycetaceae</taxon>
        <taxon>Debaryomyces</taxon>
    </lineage>
</organism>
<accession>Q6BNF3</accession>
<keyword id="KW-0067">ATP-binding</keyword>
<keyword id="KW-0963">Cytoplasm</keyword>
<keyword id="KW-0418">Kinase</keyword>
<keyword id="KW-0547">Nucleotide-binding</keyword>
<keyword id="KW-0539">Nucleus</keyword>
<keyword id="KW-0589">Pheromone response</keyword>
<keyword id="KW-1185">Reference proteome</keyword>
<keyword id="KW-0723">Serine/threonine-protein kinase</keyword>
<keyword id="KW-0808">Transferase</keyword>
<reference key="1">
    <citation type="journal article" date="2004" name="Nature">
        <title>Genome evolution in yeasts.</title>
        <authorList>
            <person name="Dujon B."/>
            <person name="Sherman D."/>
            <person name="Fischer G."/>
            <person name="Durrens P."/>
            <person name="Casaregola S."/>
            <person name="Lafontaine I."/>
            <person name="de Montigny J."/>
            <person name="Marck C."/>
            <person name="Neuveglise C."/>
            <person name="Talla E."/>
            <person name="Goffard N."/>
            <person name="Frangeul L."/>
            <person name="Aigle M."/>
            <person name="Anthouard V."/>
            <person name="Babour A."/>
            <person name="Barbe V."/>
            <person name="Barnay S."/>
            <person name="Blanchin S."/>
            <person name="Beckerich J.-M."/>
            <person name="Beyne E."/>
            <person name="Bleykasten C."/>
            <person name="Boisrame A."/>
            <person name="Boyer J."/>
            <person name="Cattolico L."/>
            <person name="Confanioleri F."/>
            <person name="de Daruvar A."/>
            <person name="Despons L."/>
            <person name="Fabre E."/>
            <person name="Fairhead C."/>
            <person name="Ferry-Dumazet H."/>
            <person name="Groppi A."/>
            <person name="Hantraye F."/>
            <person name="Hennequin C."/>
            <person name="Jauniaux N."/>
            <person name="Joyet P."/>
            <person name="Kachouri R."/>
            <person name="Kerrest A."/>
            <person name="Koszul R."/>
            <person name="Lemaire M."/>
            <person name="Lesur I."/>
            <person name="Ma L."/>
            <person name="Muller H."/>
            <person name="Nicaud J.-M."/>
            <person name="Nikolski M."/>
            <person name="Oztas S."/>
            <person name="Ozier-Kalogeropoulos O."/>
            <person name="Pellenz S."/>
            <person name="Potier S."/>
            <person name="Richard G.-F."/>
            <person name="Straub M.-L."/>
            <person name="Suleau A."/>
            <person name="Swennen D."/>
            <person name="Tekaia F."/>
            <person name="Wesolowski-Louvel M."/>
            <person name="Westhof E."/>
            <person name="Wirth B."/>
            <person name="Zeniou-Meyer M."/>
            <person name="Zivanovic Y."/>
            <person name="Bolotin-Fukuhara M."/>
            <person name="Thierry A."/>
            <person name="Bouchier C."/>
            <person name="Caudron B."/>
            <person name="Scarpelli C."/>
            <person name="Gaillardin C."/>
            <person name="Weissenbach J."/>
            <person name="Wincker P."/>
            <person name="Souciet J.-L."/>
        </authorList>
    </citation>
    <scope>NUCLEOTIDE SEQUENCE [LARGE SCALE GENOMIC DNA]</scope>
    <source>
        <strain>ATCC 36239 / CBS 767 / BCRC 21394 / JCM 1990 / NBRC 0083 / IGC 2968</strain>
    </source>
</reference>
<dbReference type="EC" id="2.7.11.1"/>
<dbReference type="EMBL" id="CR382137">
    <property type="protein sequence ID" value="CAG88548.2"/>
    <property type="molecule type" value="Genomic_DNA"/>
</dbReference>
<dbReference type="RefSeq" id="XP_460267.2">
    <property type="nucleotide sequence ID" value="XM_460267.1"/>
</dbReference>
<dbReference type="SMR" id="Q6BNF3"/>
<dbReference type="FunCoup" id="Q6BNF3">
    <property type="interactions" value="451"/>
</dbReference>
<dbReference type="STRING" id="284592.Q6BNF3"/>
<dbReference type="GeneID" id="2902125"/>
<dbReference type="KEGG" id="dha:DEHA2E22220g"/>
<dbReference type="VEuPathDB" id="FungiDB:DEHA2E22220g"/>
<dbReference type="eggNOG" id="KOG0578">
    <property type="taxonomic scope" value="Eukaryota"/>
</dbReference>
<dbReference type="HOGENOM" id="CLU_000288_26_0_1"/>
<dbReference type="InParanoid" id="Q6BNF3"/>
<dbReference type="OMA" id="RKFLAWC"/>
<dbReference type="OrthoDB" id="248923at2759"/>
<dbReference type="Proteomes" id="UP000000599">
    <property type="component" value="Chromosome E"/>
</dbReference>
<dbReference type="GO" id="GO:0005737">
    <property type="term" value="C:cytoplasm"/>
    <property type="evidence" value="ECO:0007669"/>
    <property type="project" value="UniProtKB-SubCell"/>
</dbReference>
<dbReference type="GO" id="GO:0000131">
    <property type="term" value="C:incipient cellular bud site"/>
    <property type="evidence" value="ECO:0007669"/>
    <property type="project" value="EnsemblFungi"/>
</dbReference>
<dbReference type="GO" id="GO:0043332">
    <property type="term" value="C:mating projection tip"/>
    <property type="evidence" value="ECO:0007669"/>
    <property type="project" value="EnsemblFungi"/>
</dbReference>
<dbReference type="GO" id="GO:0005634">
    <property type="term" value="C:nucleus"/>
    <property type="evidence" value="ECO:0007669"/>
    <property type="project" value="UniProtKB-SubCell"/>
</dbReference>
<dbReference type="GO" id="GO:0005524">
    <property type="term" value="F:ATP binding"/>
    <property type="evidence" value="ECO:0007669"/>
    <property type="project" value="UniProtKB-KW"/>
</dbReference>
<dbReference type="GO" id="GO:0044025">
    <property type="term" value="F:histone H2BS14 kinase activity"/>
    <property type="evidence" value="ECO:0007669"/>
    <property type="project" value="EnsemblFungi"/>
</dbReference>
<dbReference type="GO" id="GO:0008349">
    <property type="term" value="F:MAP kinase kinase kinase kinase activity"/>
    <property type="evidence" value="ECO:0007669"/>
    <property type="project" value="EnsemblFungi"/>
</dbReference>
<dbReference type="GO" id="GO:0106310">
    <property type="term" value="F:protein serine kinase activity"/>
    <property type="evidence" value="ECO:0007669"/>
    <property type="project" value="RHEA"/>
</dbReference>
<dbReference type="GO" id="GO:0007121">
    <property type="term" value="P:bipolar cellular bud site selection"/>
    <property type="evidence" value="ECO:0007669"/>
    <property type="project" value="EnsemblFungi"/>
</dbReference>
<dbReference type="GO" id="GO:0007118">
    <property type="term" value="P:budding cell apical bud growth"/>
    <property type="evidence" value="ECO:0007669"/>
    <property type="project" value="EnsemblFungi"/>
</dbReference>
<dbReference type="GO" id="GO:0070301">
    <property type="term" value="P:cellular response to hydrogen peroxide"/>
    <property type="evidence" value="ECO:0007669"/>
    <property type="project" value="EnsemblFungi"/>
</dbReference>
<dbReference type="GO" id="GO:0001403">
    <property type="term" value="P:invasive growth in response to glucose limitation"/>
    <property type="evidence" value="ECO:0007669"/>
    <property type="project" value="EnsemblFungi"/>
</dbReference>
<dbReference type="GO" id="GO:0010629">
    <property type="term" value="P:negative regulation of gene expression"/>
    <property type="evidence" value="ECO:0007669"/>
    <property type="project" value="EnsemblFungi"/>
</dbReference>
<dbReference type="GO" id="GO:2000910">
    <property type="term" value="P:negative regulation of sterol import"/>
    <property type="evidence" value="ECO:0007669"/>
    <property type="project" value="EnsemblFungi"/>
</dbReference>
<dbReference type="GO" id="GO:0000122">
    <property type="term" value="P:negative regulation of transcription by RNA polymerase II"/>
    <property type="evidence" value="ECO:0007669"/>
    <property type="project" value="EnsemblFungi"/>
</dbReference>
<dbReference type="GO" id="GO:0007232">
    <property type="term" value="P:osmosensory signaling pathway via Sho1 osmosensor"/>
    <property type="evidence" value="ECO:0007669"/>
    <property type="project" value="EnsemblFungi"/>
</dbReference>
<dbReference type="GO" id="GO:0000750">
    <property type="term" value="P:pheromone-dependent signal transduction involved in conjugation with cellular fusion"/>
    <property type="evidence" value="ECO:0007669"/>
    <property type="project" value="EnsemblFungi"/>
</dbReference>
<dbReference type="GO" id="GO:0043065">
    <property type="term" value="P:positive regulation of apoptotic process"/>
    <property type="evidence" value="ECO:0007669"/>
    <property type="project" value="EnsemblFungi"/>
</dbReference>
<dbReference type="GO" id="GO:0007124">
    <property type="term" value="P:pseudohyphal growth"/>
    <property type="evidence" value="ECO:0007669"/>
    <property type="project" value="EnsemblFungi"/>
</dbReference>
<dbReference type="GO" id="GO:0007096">
    <property type="term" value="P:regulation of exit from mitosis"/>
    <property type="evidence" value="ECO:0007669"/>
    <property type="project" value="EnsemblFungi"/>
</dbReference>
<dbReference type="GO" id="GO:0001402">
    <property type="term" value="P:signal transduction involved in filamentous growth"/>
    <property type="evidence" value="ECO:0007669"/>
    <property type="project" value="EnsemblFungi"/>
</dbReference>
<dbReference type="GO" id="GO:0035376">
    <property type="term" value="P:sterol import"/>
    <property type="evidence" value="ECO:0007669"/>
    <property type="project" value="EnsemblFungi"/>
</dbReference>
<dbReference type="GO" id="GO:0034063">
    <property type="term" value="P:stress granule assembly"/>
    <property type="evidence" value="ECO:0007669"/>
    <property type="project" value="EnsemblFungi"/>
</dbReference>
<dbReference type="GO" id="GO:0000011">
    <property type="term" value="P:vacuole inheritance"/>
    <property type="evidence" value="ECO:0007669"/>
    <property type="project" value="EnsemblFungi"/>
</dbReference>
<dbReference type="CDD" id="cd01093">
    <property type="entry name" value="CRIB_PAK_like"/>
    <property type="match status" value="1"/>
</dbReference>
<dbReference type="CDD" id="cd06614">
    <property type="entry name" value="STKc_PAK"/>
    <property type="match status" value="1"/>
</dbReference>
<dbReference type="FunFam" id="1.10.510.10:FF:000011">
    <property type="entry name" value="Non-specific serine/threonine protein kinase"/>
    <property type="match status" value="1"/>
</dbReference>
<dbReference type="FunFam" id="3.30.200.20:FF:000385">
    <property type="entry name" value="Non-specific serine/threonine protein kinase"/>
    <property type="match status" value="1"/>
</dbReference>
<dbReference type="Gene3D" id="3.90.810.10">
    <property type="entry name" value="CRIB domain"/>
    <property type="match status" value="1"/>
</dbReference>
<dbReference type="Gene3D" id="3.30.200.20">
    <property type="entry name" value="Phosphorylase Kinase, domain 1"/>
    <property type="match status" value="1"/>
</dbReference>
<dbReference type="Gene3D" id="1.10.510.10">
    <property type="entry name" value="Transferase(Phosphotransferase) domain 1"/>
    <property type="match status" value="1"/>
</dbReference>
<dbReference type="InterPro" id="IPR000095">
    <property type="entry name" value="CRIB_dom"/>
</dbReference>
<dbReference type="InterPro" id="IPR036936">
    <property type="entry name" value="CRIB_dom_sf"/>
</dbReference>
<dbReference type="InterPro" id="IPR011009">
    <property type="entry name" value="Kinase-like_dom_sf"/>
</dbReference>
<dbReference type="InterPro" id="IPR051931">
    <property type="entry name" value="PAK3-like"/>
</dbReference>
<dbReference type="InterPro" id="IPR033923">
    <property type="entry name" value="PAK_BD"/>
</dbReference>
<dbReference type="InterPro" id="IPR000719">
    <property type="entry name" value="Prot_kinase_dom"/>
</dbReference>
<dbReference type="InterPro" id="IPR017441">
    <property type="entry name" value="Protein_kinase_ATP_BS"/>
</dbReference>
<dbReference type="InterPro" id="IPR008271">
    <property type="entry name" value="Ser/Thr_kinase_AS"/>
</dbReference>
<dbReference type="PANTHER" id="PTHR45832">
    <property type="entry name" value="SERINE/THREONINE-PROTEIN KINASE SAMKA-RELATED-RELATED"/>
    <property type="match status" value="1"/>
</dbReference>
<dbReference type="PANTHER" id="PTHR45832:SF22">
    <property type="entry name" value="SERINE_THREONINE-PROTEIN KINASE SAMKA-RELATED"/>
    <property type="match status" value="1"/>
</dbReference>
<dbReference type="Pfam" id="PF00786">
    <property type="entry name" value="PBD"/>
    <property type="match status" value="1"/>
</dbReference>
<dbReference type="Pfam" id="PF00069">
    <property type="entry name" value="Pkinase"/>
    <property type="match status" value="1"/>
</dbReference>
<dbReference type="SMART" id="SM00285">
    <property type="entry name" value="PBD"/>
    <property type="match status" value="1"/>
</dbReference>
<dbReference type="SMART" id="SM00220">
    <property type="entry name" value="S_TKc"/>
    <property type="match status" value="1"/>
</dbReference>
<dbReference type="SUPFAM" id="SSF56112">
    <property type="entry name" value="Protein kinase-like (PK-like)"/>
    <property type="match status" value="1"/>
</dbReference>
<dbReference type="PROSITE" id="PS50108">
    <property type="entry name" value="CRIB"/>
    <property type="match status" value="1"/>
</dbReference>
<dbReference type="PROSITE" id="PS00107">
    <property type="entry name" value="PROTEIN_KINASE_ATP"/>
    <property type="match status" value="1"/>
</dbReference>
<dbReference type="PROSITE" id="PS50011">
    <property type="entry name" value="PROTEIN_KINASE_DOM"/>
    <property type="match status" value="1"/>
</dbReference>
<dbReference type="PROSITE" id="PS00108">
    <property type="entry name" value="PROTEIN_KINASE_ST"/>
    <property type="match status" value="1"/>
</dbReference>
<feature type="chain" id="PRO_0000237629" description="Serine/threonine-protein kinase STE20">
    <location>
        <begin position="1"/>
        <end position="1079"/>
    </location>
</feature>
<feature type="domain" description="CRIB" evidence="2">
    <location>
        <begin position="422"/>
        <end position="435"/>
    </location>
</feature>
<feature type="domain" description="Protein kinase" evidence="3">
    <location>
        <begin position="801"/>
        <end position="1053"/>
    </location>
</feature>
<feature type="region of interest" description="Disordered" evidence="5">
    <location>
        <begin position="21"/>
        <end position="50"/>
    </location>
</feature>
<feature type="region of interest" description="Disordered" evidence="5">
    <location>
        <begin position="79"/>
        <end position="116"/>
    </location>
</feature>
<feature type="region of interest" description="Disordered" evidence="5">
    <location>
        <begin position="148"/>
        <end position="220"/>
    </location>
</feature>
<feature type="region of interest" description="Disordered" evidence="5">
    <location>
        <begin position="261"/>
        <end position="323"/>
    </location>
</feature>
<feature type="region of interest" description="Disordered" evidence="5">
    <location>
        <begin position="339"/>
        <end position="389"/>
    </location>
</feature>
<feature type="region of interest" description="Disordered" evidence="5">
    <location>
        <begin position="501"/>
        <end position="766"/>
    </location>
</feature>
<feature type="compositionally biased region" description="Basic and acidic residues" evidence="5">
    <location>
        <begin position="21"/>
        <end position="32"/>
    </location>
</feature>
<feature type="compositionally biased region" description="Acidic residues" evidence="5">
    <location>
        <begin position="80"/>
        <end position="91"/>
    </location>
</feature>
<feature type="compositionally biased region" description="Polar residues" evidence="5">
    <location>
        <begin position="167"/>
        <end position="186"/>
    </location>
</feature>
<feature type="compositionally biased region" description="Basic and acidic residues" evidence="5">
    <location>
        <begin position="211"/>
        <end position="220"/>
    </location>
</feature>
<feature type="compositionally biased region" description="Polar residues" evidence="5">
    <location>
        <begin position="282"/>
        <end position="306"/>
    </location>
</feature>
<feature type="compositionally biased region" description="Low complexity" evidence="5">
    <location>
        <begin position="309"/>
        <end position="322"/>
    </location>
</feature>
<feature type="compositionally biased region" description="Polar residues" evidence="5">
    <location>
        <begin position="357"/>
        <end position="383"/>
    </location>
</feature>
<feature type="compositionally biased region" description="Polar residues" evidence="5">
    <location>
        <begin position="501"/>
        <end position="522"/>
    </location>
</feature>
<feature type="compositionally biased region" description="Low complexity" evidence="5">
    <location>
        <begin position="523"/>
        <end position="548"/>
    </location>
</feature>
<feature type="compositionally biased region" description="Polar residues" evidence="5">
    <location>
        <begin position="549"/>
        <end position="561"/>
    </location>
</feature>
<feature type="compositionally biased region" description="Low complexity" evidence="5">
    <location>
        <begin position="591"/>
        <end position="600"/>
    </location>
</feature>
<feature type="compositionally biased region" description="Polar residues" evidence="5">
    <location>
        <begin position="651"/>
        <end position="678"/>
    </location>
</feature>
<feature type="compositionally biased region" description="Low complexity" evidence="5">
    <location>
        <begin position="679"/>
        <end position="690"/>
    </location>
</feature>
<feature type="compositionally biased region" description="Basic and acidic residues" evidence="5">
    <location>
        <begin position="706"/>
        <end position="721"/>
    </location>
</feature>
<feature type="compositionally biased region" description="Basic and acidic residues" evidence="5">
    <location>
        <begin position="730"/>
        <end position="753"/>
    </location>
</feature>
<feature type="active site" description="Proton acceptor" evidence="3 4">
    <location>
        <position position="921"/>
    </location>
</feature>
<feature type="binding site" evidence="3">
    <location>
        <begin position="807"/>
        <end position="815"/>
    </location>
    <ligand>
        <name>ATP</name>
        <dbReference type="ChEBI" id="CHEBI:30616"/>
    </ligand>
</feature>
<feature type="binding site" evidence="3">
    <location>
        <position position="831"/>
    </location>
    <ligand>
        <name>ATP</name>
        <dbReference type="ChEBI" id="CHEBI:30616"/>
    </ligand>
</feature>
<evidence type="ECO:0000250" key="1"/>
<evidence type="ECO:0000255" key="2">
    <source>
        <dbReference type="PROSITE-ProRule" id="PRU00057"/>
    </source>
</evidence>
<evidence type="ECO:0000255" key="3">
    <source>
        <dbReference type="PROSITE-ProRule" id="PRU00159"/>
    </source>
</evidence>
<evidence type="ECO:0000255" key="4">
    <source>
        <dbReference type="PROSITE-ProRule" id="PRU10027"/>
    </source>
</evidence>
<evidence type="ECO:0000256" key="5">
    <source>
        <dbReference type="SAM" id="MobiDB-lite"/>
    </source>
</evidence>
<evidence type="ECO:0000305" key="6"/>
<gene>
    <name type="primary">STE20</name>
    <name type="ordered locus">DEHA2E22220g</name>
</gene>
<sequence length="1079" mass="119392">MYKAKDTEYKLGSPIHEKIPSFEIGSDRRLDIDDNEGEEVSARDEHDDDEDYEYKRIIEEEFENDREFKDEHGFEIGVVDNDENNDQDCEADTSKSIGSLPRMPGTYDFSGLKSDDNQYNELTETLNQDDGNQSNDIAVGKLGDEASHTYKSTLDPGKPLQNPPPSNLNIDSILKSQLENNKSEGSIGQRIDSISRKTTNSSGGPNIMKDNTLDRIPTHDYENIDDNNVFNRAGDPKIRGGLNASNDASINDNIADISQSTIQTSTDAGESINKGNGDITKGLSNVDVNDTSVNKSKQRNISSGSVIRNPPSASQANQSNQSYHQTRAITPVMNQMNKFQGSNSEASSPREHLGMGINNSAPSTGANSNTSSPMNGSYPNSIAKSRRSGNRVKGVFSNMFSKNKTSTSVTSSPETHAINMKISTPFNAKHVAHVGVDDNGSYTGLPIEWERLLSASGISKKEQQQHPQAVMDIVAFYQDTNDDNPDENAFKKFHYDNDSSHSSIYNATPPSTPGIPSTYNATPLQSEKQLQRQQSQKSQSSHPVQVQSTPKTPNNNYENQFIPSRPAPKPPSSSIPSTKTIKPPPVPPSPSTNTNISPASKKNSFMGRSFSSKSIKALRNSNRKISEPPKAPQSKISDSNTEMGIPKSKSHSNSLSTQSEVEPTKGSTTAPVSSTAKFNSTTINNINGHNIIEEEKNNNTLLSNPKQREQKPDSTIEKRDTPPSPSQSRVSEEESTKKETSEKYNNKENDIPKKSSQQPVRDAKQAALLAQKKREDKKRKNQQIISKLQQICSEGDPNELYKDLMKIGQGASGGVYIAHDVNHRSQTVAIKQMNLEQQPKKELIINEILVMKGSKHENIVNFIDSYLLRGDLWVVMEYMEGGSLTEIVTHSVMTEGQIGAVCRETLKGLRFLHSKGVIHRDIKSDNILLNIDGNIKMTDFGFCAQINEINLKRTTMVGTPYWMAPEVVSRKEYGPKVDVWSLGIMIIEMIEGEPPYLNETPLRALYLIATNGTPKLKEPEALSYDIRKFLSWCLQVDFNKRGNADQLLNDKFILEADDVESLSPLVKIAAMKKATELDE</sequence>
<protein>
    <recommendedName>
        <fullName>Serine/threonine-protein kinase STE20</fullName>
        <ecNumber>2.7.11.1</ecNumber>
    </recommendedName>
</protein>
<name>STE20_DEBHA</name>
<comment type="function">
    <text evidence="1">MAP4K component of the MAPK pathway required for the mating pheromone response and the regulation of cell polarity and cell cycle. Phosphorylates histone H2B to form H2BS10ph (By similarity).</text>
</comment>
<comment type="catalytic activity">
    <reaction>
        <text>L-seryl-[protein] + ATP = O-phospho-L-seryl-[protein] + ADP + H(+)</text>
        <dbReference type="Rhea" id="RHEA:17989"/>
        <dbReference type="Rhea" id="RHEA-COMP:9863"/>
        <dbReference type="Rhea" id="RHEA-COMP:11604"/>
        <dbReference type="ChEBI" id="CHEBI:15378"/>
        <dbReference type="ChEBI" id="CHEBI:29999"/>
        <dbReference type="ChEBI" id="CHEBI:30616"/>
        <dbReference type="ChEBI" id="CHEBI:83421"/>
        <dbReference type="ChEBI" id="CHEBI:456216"/>
        <dbReference type="EC" id="2.7.11.1"/>
    </reaction>
</comment>
<comment type="catalytic activity">
    <reaction>
        <text>L-threonyl-[protein] + ATP = O-phospho-L-threonyl-[protein] + ADP + H(+)</text>
        <dbReference type="Rhea" id="RHEA:46608"/>
        <dbReference type="Rhea" id="RHEA-COMP:11060"/>
        <dbReference type="Rhea" id="RHEA-COMP:11605"/>
        <dbReference type="ChEBI" id="CHEBI:15378"/>
        <dbReference type="ChEBI" id="CHEBI:30013"/>
        <dbReference type="ChEBI" id="CHEBI:30616"/>
        <dbReference type="ChEBI" id="CHEBI:61977"/>
        <dbReference type="ChEBI" id="CHEBI:456216"/>
        <dbReference type="EC" id="2.7.11.1"/>
    </reaction>
</comment>
<comment type="subcellular location">
    <subcellularLocation>
        <location evidence="1">Cytoplasm</location>
    </subcellularLocation>
    <subcellularLocation>
        <location evidence="1">Nucleus</location>
    </subcellularLocation>
</comment>
<comment type="similarity">
    <text evidence="6">Belongs to the protein kinase superfamily. STE Ser/Thr protein kinase family. STE20 subfamily.</text>
</comment>
<proteinExistence type="inferred from homology"/>